<organism>
    <name type="scientific">Shewanella frigidimarina (strain NCIMB 400)</name>
    <dbReference type="NCBI Taxonomy" id="318167"/>
    <lineage>
        <taxon>Bacteria</taxon>
        <taxon>Pseudomonadati</taxon>
        <taxon>Pseudomonadota</taxon>
        <taxon>Gammaproteobacteria</taxon>
        <taxon>Alteromonadales</taxon>
        <taxon>Shewanellaceae</taxon>
        <taxon>Shewanella</taxon>
    </lineage>
</organism>
<keyword id="KW-0378">Hydrolase</keyword>
<keyword id="KW-0479">Metal-binding</keyword>
<keyword id="KW-1185">Reference proteome</keyword>
<keyword id="KW-0862">Zinc</keyword>
<name>CDD_SHEFN</name>
<gene>
    <name evidence="1" type="primary">cdd</name>
    <name type="ordered locus">Sfri_1637</name>
</gene>
<evidence type="ECO:0000255" key="1">
    <source>
        <dbReference type="HAMAP-Rule" id="MF_01558"/>
    </source>
</evidence>
<evidence type="ECO:0000255" key="2">
    <source>
        <dbReference type="PROSITE-ProRule" id="PRU01083"/>
    </source>
</evidence>
<reference key="1">
    <citation type="submission" date="2006-08" db="EMBL/GenBank/DDBJ databases">
        <title>Complete sequence of Shewanella frigidimarina NCIMB 400.</title>
        <authorList>
            <consortium name="US DOE Joint Genome Institute"/>
            <person name="Copeland A."/>
            <person name="Lucas S."/>
            <person name="Lapidus A."/>
            <person name="Barry K."/>
            <person name="Detter J.C."/>
            <person name="Glavina del Rio T."/>
            <person name="Hammon N."/>
            <person name="Israni S."/>
            <person name="Dalin E."/>
            <person name="Tice H."/>
            <person name="Pitluck S."/>
            <person name="Fredrickson J.K."/>
            <person name="Kolker E."/>
            <person name="McCuel L.A."/>
            <person name="DiChristina T."/>
            <person name="Nealson K.H."/>
            <person name="Newman D."/>
            <person name="Tiedje J.M."/>
            <person name="Zhou J."/>
            <person name="Romine M.F."/>
            <person name="Culley D.E."/>
            <person name="Serres M."/>
            <person name="Chertkov O."/>
            <person name="Brettin T."/>
            <person name="Bruce D."/>
            <person name="Han C."/>
            <person name="Tapia R."/>
            <person name="Gilna P."/>
            <person name="Schmutz J."/>
            <person name="Larimer F."/>
            <person name="Land M."/>
            <person name="Hauser L."/>
            <person name="Kyrpides N."/>
            <person name="Mikhailova N."/>
            <person name="Richardson P."/>
        </authorList>
    </citation>
    <scope>NUCLEOTIDE SEQUENCE [LARGE SCALE GENOMIC DNA]</scope>
    <source>
        <strain>NCIMB 400</strain>
    </source>
</reference>
<comment type="function">
    <text evidence="1">This enzyme scavenges exogenous and endogenous cytidine and 2'-deoxycytidine for UMP synthesis.</text>
</comment>
<comment type="catalytic activity">
    <reaction evidence="1">
        <text>cytidine + H2O + H(+) = uridine + NH4(+)</text>
        <dbReference type="Rhea" id="RHEA:16069"/>
        <dbReference type="ChEBI" id="CHEBI:15377"/>
        <dbReference type="ChEBI" id="CHEBI:15378"/>
        <dbReference type="ChEBI" id="CHEBI:16704"/>
        <dbReference type="ChEBI" id="CHEBI:17562"/>
        <dbReference type="ChEBI" id="CHEBI:28938"/>
        <dbReference type="EC" id="3.5.4.5"/>
    </reaction>
</comment>
<comment type="catalytic activity">
    <reaction evidence="1">
        <text>2'-deoxycytidine + H2O + H(+) = 2'-deoxyuridine + NH4(+)</text>
        <dbReference type="Rhea" id="RHEA:13433"/>
        <dbReference type="ChEBI" id="CHEBI:15377"/>
        <dbReference type="ChEBI" id="CHEBI:15378"/>
        <dbReference type="ChEBI" id="CHEBI:15698"/>
        <dbReference type="ChEBI" id="CHEBI:16450"/>
        <dbReference type="ChEBI" id="CHEBI:28938"/>
        <dbReference type="EC" id="3.5.4.5"/>
    </reaction>
</comment>
<comment type="cofactor">
    <cofactor evidence="1">
        <name>Zn(2+)</name>
        <dbReference type="ChEBI" id="CHEBI:29105"/>
    </cofactor>
    <text evidence="1">Binds 1 zinc ion.</text>
</comment>
<comment type="subunit">
    <text evidence="1">Homodimer.</text>
</comment>
<comment type="similarity">
    <text evidence="1">Belongs to the cytidine and deoxycytidylate deaminase family.</text>
</comment>
<sequence>MQNRFLESITQLDKPLANALVPLLHDQFCGHIDASQFAGLVKASGKTEQQVLMDLLPIAAALANPPISEFYVGAIAKGSSGDLYMGANLELPGEALFHSVHAEQSAISHAWLSGETEIVDIIVNFSPCGHCRQFMNELVNGSKINIHLPNQETQTLAHYLPYAFGPSDLDVTVPLLCKREQEFNCDSDDPMIIEAIDQMGLSYAPYTNNNAAVVLETNDGATFCGRYAESAAFNPSMQPMQMALSNLIRNNRQYSEIKRAVLVESSVGKITLVGAAMDALHAIAPIELQHMVVEPLLG</sequence>
<protein>
    <recommendedName>
        <fullName evidence="1">Cytidine deaminase</fullName>
        <ecNumber evidence="1">3.5.4.5</ecNumber>
    </recommendedName>
    <alternativeName>
        <fullName evidence="1">Cytidine aminohydrolase</fullName>
        <shortName evidence="1">CDA</shortName>
    </alternativeName>
</protein>
<dbReference type="EC" id="3.5.4.5" evidence="1"/>
<dbReference type="EMBL" id="CP000447">
    <property type="protein sequence ID" value="ABI71488.1"/>
    <property type="molecule type" value="Genomic_DNA"/>
</dbReference>
<dbReference type="RefSeq" id="WP_011637104.1">
    <property type="nucleotide sequence ID" value="NC_008345.1"/>
</dbReference>
<dbReference type="SMR" id="Q083S7"/>
<dbReference type="STRING" id="318167.Sfri_1637"/>
<dbReference type="KEGG" id="sfr:Sfri_1637"/>
<dbReference type="eggNOG" id="COG0295">
    <property type="taxonomic scope" value="Bacteria"/>
</dbReference>
<dbReference type="HOGENOM" id="CLU_052424_0_0_6"/>
<dbReference type="OrthoDB" id="9795347at2"/>
<dbReference type="Proteomes" id="UP000000684">
    <property type="component" value="Chromosome"/>
</dbReference>
<dbReference type="GO" id="GO:0005829">
    <property type="term" value="C:cytosol"/>
    <property type="evidence" value="ECO:0007669"/>
    <property type="project" value="TreeGrafter"/>
</dbReference>
<dbReference type="GO" id="GO:0004126">
    <property type="term" value="F:cytidine deaminase activity"/>
    <property type="evidence" value="ECO:0007669"/>
    <property type="project" value="UniProtKB-UniRule"/>
</dbReference>
<dbReference type="GO" id="GO:0042802">
    <property type="term" value="F:identical protein binding"/>
    <property type="evidence" value="ECO:0007669"/>
    <property type="project" value="UniProtKB-ARBA"/>
</dbReference>
<dbReference type="GO" id="GO:0008270">
    <property type="term" value="F:zinc ion binding"/>
    <property type="evidence" value="ECO:0007669"/>
    <property type="project" value="UniProtKB-UniRule"/>
</dbReference>
<dbReference type="GO" id="GO:0009972">
    <property type="term" value="P:cytidine deamination"/>
    <property type="evidence" value="ECO:0007669"/>
    <property type="project" value="InterPro"/>
</dbReference>
<dbReference type="CDD" id="cd01283">
    <property type="entry name" value="cytidine_deaminase"/>
    <property type="match status" value="1"/>
</dbReference>
<dbReference type="FunFam" id="3.40.140.10:FF:000007">
    <property type="entry name" value="Cytidine deaminase"/>
    <property type="match status" value="1"/>
</dbReference>
<dbReference type="Gene3D" id="3.40.140.10">
    <property type="entry name" value="Cytidine Deaminase, domain 2"/>
    <property type="match status" value="2"/>
</dbReference>
<dbReference type="HAMAP" id="MF_01558">
    <property type="entry name" value="Cyt_deam"/>
    <property type="match status" value="1"/>
</dbReference>
<dbReference type="InterPro" id="IPR016192">
    <property type="entry name" value="APOBEC/CMP_deaminase_Zn-bd"/>
</dbReference>
<dbReference type="InterPro" id="IPR002125">
    <property type="entry name" value="CMP_dCMP_dom"/>
</dbReference>
<dbReference type="InterPro" id="IPR013171">
    <property type="entry name" value="Cyd/dCyd_deaminase_Zn-bd"/>
</dbReference>
<dbReference type="InterPro" id="IPR050202">
    <property type="entry name" value="Cyt/Deoxycyt_deaminase"/>
</dbReference>
<dbReference type="InterPro" id="IPR016193">
    <property type="entry name" value="Cytidine_deaminase-like"/>
</dbReference>
<dbReference type="InterPro" id="IPR020797">
    <property type="entry name" value="Cytidine_deaminase_bacteria"/>
</dbReference>
<dbReference type="NCBIfam" id="NF006537">
    <property type="entry name" value="PRK09027.1"/>
    <property type="match status" value="1"/>
</dbReference>
<dbReference type="PANTHER" id="PTHR11644">
    <property type="entry name" value="CYTIDINE DEAMINASE"/>
    <property type="match status" value="1"/>
</dbReference>
<dbReference type="PANTHER" id="PTHR11644:SF2">
    <property type="entry name" value="CYTIDINE DEAMINASE"/>
    <property type="match status" value="1"/>
</dbReference>
<dbReference type="Pfam" id="PF00383">
    <property type="entry name" value="dCMP_cyt_deam_1"/>
    <property type="match status" value="1"/>
</dbReference>
<dbReference type="Pfam" id="PF08211">
    <property type="entry name" value="dCMP_cyt_deam_2"/>
    <property type="match status" value="1"/>
</dbReference>
<dbReference type="PIRSF" id="PIRSF006334">
    <property type="entry name" value="Cdd_plus_pseudo"/>
    <property type="match status" value="1"/>
</dbReference>
<dbReference type="SUPFAM" id="SSF53927">
    <property type="entry name" value="Cytidine deaminase-like"/>
    <property type="match status" value="2"/>
</dbReference>
<dbReference type="PROSITE" id="PS00903">
    <property type="entry name" value="CYT_DCMP_DEAMINASES_1"/>
    <property type="match status" value="1"/>
</dbReference>
<dbReference type="PROSITE" id="PS51747">
    <property type="entry name" value="CYT_DCMP_DEAMINASES_2"/>
    <property type="match status" value="2"/>
</dbReference>
<proteinExistence type="inferred from homology"/>
<accession>Q083S7</accession>
<feature type="chain" id="PRO_1000068962" description="Cytidine deaminase">
    <location>
        <begin position="1"/>
        <end position="298"/>
    </location>
</feature>
<feature type="domain" description="CMP/dCMP-type deaminase 1" evidence="2">
    <location>
        <begin position="47"/>
        <end position="167"/>
    </location>
</feature>
<feature type="domain" description="CMP/dCMP-type deaminase 2" evidence="2">
    <location>
        <begin position="186"/>
        <end position="298"/>
    </location>
</feature>
<feature type="active site" description="Proton donor" evidence="1">
    <location>
        <position position="103"/>
    </location>
</feature>
<feature type="binding site" evidence="1">
    <location>
        <begin position="88"/>
        <end position="90"/>
    </location>
    <ligand>
        <name>substrate</name>
    </ligand>
</feature>
<feature type="binding site" evidence="1">
    <location>
        <position position="101"/>
    </location>
    <ligand>
        <name>Zn(2+)</name>
        <dbReference type="ChEBI" id="CHEBI:29105"/>
        <note>catalytic</note>
    </ligand>
</feature>
<feature type="binding site" evidence="1">
    <location>
        <position position="128"/>
    </location>
    <ligand>
        <name>Zn(2+)</name>
        <dbReference type="ChEBI" id="CHEBI:29105"/>
        <note>catalytic</note>
    </ligand>
</feature>
<feature type="binding site" evidence="1">
    <location>
        <position position="131"/>
    </location>
    <ligand>
        <name>Zn(2+)</name>
        <dbReference type="ChEBI" id="CHEBI:29105"/>
        <note>catalytic</note>
    </ligand>
</feature>